<proteinExistence type="inferred from homology"/>
<name>RL31_ALIFM</name>
<feature type="chain" id="PRO_1000126765" description="Large ribosomal subunit protein bL31">
    <location>
        <begin position="1"/>
        <end position="72"/>
    </location>
</feature>
<feature type="binding site" evidence="1">
    <location>
        <position position="16"/>
    </location>
    <ligand>
        <name>Zn(2+)</name>
        <dbReference type="ChEBI" id="CHEBI:29105"/>
    </ligand>
</feature>
<feature type="binding site" evidence="1">
    <location>
        <position position="18"/>
    </location>
    <ligand>
        <name>Zn(2+)</name>
        <dbReference type="ChEBI" id="CHEBI:29105"/>
    </ligand>
</feature>
<feature type="binding site" evidence="1">
    <location>
        <position position="38"/>
    </location>
    <ligand>
        <name>Zn(2+)</name>
        <dbReference type="ChEBI" id="CHEBI:29105"/>
    </ligand>
</feature>
<feature type="binding site" evidence="1">
    <location>
        <position position="41"/>
    </location>
    <ligand>
        <name>Zn(2+)</name>
        <dbReference type="ChEBI" id="CHEBI:29105"/>
    </ligand>
</feature>
<accession>B5FBA6</accession>
<organism>
    <name type="scientific">Aliivibrio fischeri (strain MJ11)</name>
    <name type="common">Vibrio fischeri</name>
    <dbReference type="NCBI Taxonomy" id="388396"/>
    <lineage>
        <taxon>Bacteria</taxon>
        <taxon>Pseudomonadati</taxon>
        <taxon>Pseudomonadota</taxon>
        <taxon>Gammaproteobacteria</taxon>
        <taxon>Vibrionales</taxon>
        <taxon>Vibrionaceae</taxon>
        <taxon>Aliivibrio</taxon>
    </lineage>
</organism>
<comment type="function">
    <text evidence="1">Binds the 23S rRNA.</text>
</comment>
<comment type="cofactor">
    <cofactor evidence="1">
        <name>Zn(2+)</name>
        <dbReference type="ChEBI" id="CHEBI:29105"/>
    </cofactor>
    <text evidence="1">Binds 1 zinc ion per subunit.</text>
</comment>
<comment type="subunit">
    <text evidence="1">Part of the 50S ribosomal subunit.</text>
</comment>
<comment type="similarity">
    <text evidence="1">Belongs to the bacterial ribosomal protein bL31 family. Type A subfamily.</text>
</comment>
<evidence type="ECO:0000255" key="1">
    <source>
        <dbReference type="HAMAP-Rule" id="MF_00501"/>
    </source>
</evidence>
<evidence type="ECO:0000305" key="2"/>
<gene>
    <name evidence="1" type="primary">rpmE</name>
    <name type="ordered locus">VFMJ11_2385</name>
</gene>
<dbReference type="EMBL" id="CP001139">
    <property type="protein sequence ID" value="ACH65420.1"/>
    <property type="molecule type" value="Genomic_DNA"/>
</dbReference>
<dbReference type="RefSeq" id="WP_005421061.1">
    <property type="nucleotide sequence ID" value="NC_011184.1"/>
</dbReference>
<dbReference type="SMR" id="B5FBA6"/>
<dbReference type="GeneID" id="54164988"/>
<dbReference type="KEGG" id="vfm:VFMJ11_2385"/>
<dbReference type="HOGENOM" id="CLU_114306_4_3_6"/>
<dbReference type="Proteomes" id="UP000001857">
    <property type="component" value="Chromosome I"/>
</dbReference>
<dbReference type="GO" id="GO:1990904">
    <property type="term" value="C:ribonucleoprotein complex"/>
    <property type="evidence" value="ECO:0007669"/>
    <property type="project" value="UniProtKB-KW"/>
</dbReference>
<dbReference type="GO" id="GO:0005840">
    <property type="term" value="C:ribosome"/>
    <property type="evidence" value="ECO:0007669"/>
    <property type="project" value="UniProtKB-KW"/>
</dbReference>
<dbReference type="GO" id="GO:0046872">
    <property type="term" value="F:metal ion binding"/>
    <property type="evidence" value="ECO:0007669"/>
    <property type="project" value="UniProtKB-KW"/>
</dbReference>
<dbReference type="GO" id="GO:0019843">
    <property type="term" value="F:rRNA binding"/>
    <property type="evidence" value="ECO:0007669"/>
    <property type="project" value="UniProtKB-KW"/>
</dbReference>
<dbReference type="GO" id="GO:0003735">
    <property type="term" value="F:structural constituent of ribosome"/>
    <property type="evidence" value="ECO:0007669"/>
    <property type="project" value="InterPro"/>
</dbReference>
<dbReference type="GO" id="GO:0006412">
    <property type="term" value="P:translation"/>
    <property type="evidence" value="ECO:0007669"/>
    <property type="project" value="UniProtKB-UniRule"/>
</dbReference>
<dbReference type="Gene3D" id="4.10.830.30">
    <property type="entry name" value="Ribosomal protein L31"/>
    <property type="match status" value="1"/>
</dbReference>
<dbReference type="HAMAP" id="MF_00501">
    <property type="entry name" value="Ribosomal_bL31_1"/>
    <property type="match status" value="1"/>
</dbReference>
<dbReference type="InterPro" id="IPR034704">
    <property type="entry name" value="Ribosomal_bL28/bL31-like_sf"/>
</dbReference>
<dbReference type="InterPro" id="IPR002150">
    <property type="entry name" value="Ribosomal_bL31"/>
</dbReference>
<dbReference type="InterPro" id="IPR027491">
    <property type="entry name" value="Ribosomal_bL31_A"/>
</dbReference>
<dbReference type="InterPro" id="IPR042105">
    <property type="entry name" value="Ribosomal_bL31_sf"/>
</dbReference>
<dbReference type="NCBIfam" id="TIGR00105">
    <property type="entry name" value="L31"/>
    <property type="match status" value="1"/>
</dbReference>
<dbReference type="NCBIfam" id="NF000612">
    <property type="entry name" value="PRK00019.1"/>
    <property type="match status" value="1"/>
</dbReference>
<dbReference type="NCBIfam" id="NF001809">
    <property type="entry name" value="PRK00528.1"/>
    <property type="match status" value="1"/>
</dbReference>
<dbReference type="PANTHER" id="PTHR33280">
    <property type="entry name" value="50S RIBOSOMAL PROTEIN L31, CHLOROPLASTIC"/>
    <property type="match status" value="1"/>
</dbReference>
<dbReference type="PANTHER" id="PTHR33280:SF6">
    <property type="entry name" value="LARGE RIBOSOMAL SUBUNIT PROTEIN BL31A"/>
    <property type="match status" value="1"/>
</dbReference>
<dbReference type="Pfam" id="PF01197">
    <property type="entry name" value="Ribosomal_L31"/>
    <property type="match status" value="1"/>
</dbReference>
<dbReference type="PRINTS" id="PR01249">
    <property type="entry name" value="RIBOSOMALL31"/>
</dbReference>
<dbReference type="SUPFAM" id="SSF143800">
    <property type="entry name" value="L28p-like"/>
    <property type="match status" value="1"/>
</dbReference>
<dbReference type="PROSITE" id="PS01143">
    <property type="entry name" value="RIBOSOMAL_L31"/>
    <property type="match status" value="1"/>
</dbReference>
<reference key="1">
    <citation type="submission" date="2008-08" db="EMBL/GenBank/DDBJ databases">
        <title>Complete sequence of Vibrio fischeri strain MJ11.</title>
        <authorList>
            <person name="Mandel M.J."/>
            <person name="Stabb E.V."/>
            <person name="Ruby E.G."/>
            <person name="Ferriera S."/>
            <person name="Johnson J."/>
            <person name="Kravitz S."/>
            <person name="Beeson K."/>
            <person name="Sutton G."/>
            <person name="Rogers Y.-H."/>
            <person name="Friedman R."/>
            <person name="Frazier M."/>
            <person name="Venter J.C."/>
        </authorList>
    </citation>
    <scope>NUCLEOTIDE SEQUENCE [LARGE SCALE GENOMIC DNA]</scope>
    <source>
        <strain>MJ11</strain>
    </source>
</reference>
<keyword id="KW-0479">Metal-binding</keyword>
<keyword id="KW-0687">Ribonucleoprotein</keyword>
<keyword id="KW-0689">Ribosomal protein</keyword>
<keyword id="KW-0694">RNA-binding</keyword>
<keyword id="KW-0699">rRNA-binding</keyword>
<keyword id="KW-0862">Zinc</keyword>
<protein>
    <recommendedName>
        <fullName evidence="1">Large ribosomal subunit protein bL31</fullName>
    </recommendedName>
    <alternativeName>
        <fullName evidence="2">50S ribosomal protein L31</fullName>
    </alternativeName>
</protein>
<sequence>MKVGIHPEYTAVKATCSCGNEFEFNSALGKDSIHLDVCDKCHPFYTGKQRIVDTGGRVDRFNKRFGAIGSKK</sequence>